<keyword id="KW-0249">Electron transport</keyword>
<keyword id="KW-0349">Heme</keyword>
<keyword id="KW-0408">Iron</keyword>
<keyword id="KW-0472">Membrane</keyword>
<keyword id="KW-0479">Metal-binding</keyword>
<keyword id="KW-0496">Mitochondrion</keyword>
<keyword id="KW-0999">Mitochondrion inner membrane</keyword>
<keyword id="KW-0679">Respiratory chain</keyword>
<keyword id="KW-0812">Transmembrane</keyword>
<keyword id="KW-1133">Transmembrane helix</keyword>
<keyword id="KW-0813">Transport</keyword>
<keyword id="KW-0830">Ubiquinone</keyword>
<geneLocation type="mitochondrion"/>
<dbReference type="EMBL" id="U66512">
    <property type="protein sequence ID" value="AAB06771.1"/>
    <property type="molecule type" value="Genomic_DNA"/>
</dbReference>
<dbReference type="SMR" id="Q95731"/>
<dbReference type="GO" id="GO:0005743">
    <property type="term" value="C:mitochondrial inner membrane"/>
    <property type="evidence" value="ECO:0007669"/>
    <property type="project" value="UniProtKB-SubCell"/>
</dbReference>
<dbReference type="GO" id="GO:0045275">
    <property type="term" value="C:respiratory chain complex III"/>
    <property type="evidence" value="ECO:0007669"/>
    <property type="project" value="InterPro"/>
</dbReference>
<dbReference type="GO" id="GO:0046872">
    <property type="term" value="F:metal ion binding"/>
    <property type="evidence" value="ECO:0007669"/>
    <property type="project" value="UniProtKB-KW"/>
</dbReference>
<dbReference type="GO" id="GO:0008121">
    <property type="term" value="F:ubiquinol-cytochrome-c reductase activity"/>
    <property type="evidence" value="ECO:0007669"/>
    <property type="project" value="InterPro"/>
</dbReference>
<dbReference type="GO" id="GO:0006122">
    <property type="term" value="P:mitochondrial electron transport, ubiquinol to cytochrome c"/>
    <property type="evidence" value="ECO:0007669"/>
    <property type="project" value="TreeGrafter"/>
</dbReference>
<dbReference type="CDD" id="cd00290">
    <property type="entry name" value="cytochrome_b_C"/>
    <property type="match status" value="1"/>
</dbReference>
<dbReference type="CDD" id="cd00284">
    <property type="entry name" value="Cytochrome_b_N"/>
    <property type="match status" value="1"/>
</dbReference>
<dbReference type="FunFam" id="1.20.810.10:FF:000002">
    <property type="entry name" value="Cytochrome b"/>
    <property type="match status" value="1"/>
</dbReference>
<dbReference type="Gene3D" id="1.20.810.10">
    <property type="entry name" value="Cytochrome Bc1 Complex, Chain C"/>
    <property type="match status" value="1"/>
</dbReference>
<dbReference type="InterPro" id="IPR005798">
    <property type="entry name" value="Cyt_b/b6_C"/>
</dbReference>
<dbReference type="InterPro" id="IPR036150">
    <property type="entry name" value="Cyt_b/b6_C_sf"/>
</dbReference>
<dbReference type="InterPro" id="IPR005797">
    <property type="entry name" value="Cyt_b/b6_N"/>
</dbReference>
<dbReference type="InterPro" id="IPR027387">
    <property type="entry name" value="Cytb/b6-like_sf"/>
</dbReference>
<dbReference type="InterPro" id="IPR030689">
    <property type="entry name" value="Cytochrome_b"/>
</dbReference>
<dbReference type="InterPro" id="IPR048260">
    <property type="entry name" value="Cytochrome_b_C_euk/bac"/>
</dbReference>
<dbReference type="InterPro" id="IPR048259">
    <property type="entry name" value="Cytochrome_b_N_euk/bac"/>
</dbReference>
<dbReference type="InterPro" id="IPR016174">
    <property type="entry name" value="Di-haem_cyt_TM"/>
</dbReference>
<dbReference type="PANTHER" id="PTHR19271">
    <property type="entry name" value="CYTOCHROME B"/>
    <property type="match status" value="1"/>
</dbReference>
<dbReference type="PANTHER" id="PTHR19271:SF16">
    <property type="entry name" value="CYTOCHROME B"/>
    <property type="match status" value="1"/>
</dbReference>
<dbReference type="Pfam" id="PF00032">
    <property type="entry name" value="Cytochrom_B_C"/>
    <property type="match status" value="1"/>
</dbReference>
<dbReference type="Pfam" id="PF00033">
    <property type="entry name" value="Cytochrome_B"/>
    <property type="match status" value="1"/>
</dbReference>
<dbReference type="PIRSF" id="PIRSF038885">
    <property type="entry name" value="COB"/>
    <property type="match status" value="1"/>
</dbReference>
<dbReference type="SUPFAM" id="SSF81648">
    <property type="entry name" value="a domain/subunit of cytochrome bc1 complex (Ubiquinol-cytochrome c reductase)"/>
    <property type="match status" value="1"/>
</dbReference>
<dbReference type="SUPFAM" id="SSF81342">
    <property type="entry name" value="Transmembrane di-heme cytochromes"/>
    <property type="match status" value="1"/>
</dbReference>
<dbReference type="PROSITE" id="PS51003">
    <property type="entry name" value="CYTB_CTER"/>
    <property type="match status" value="1"/>
</dbReference>
<dbReference type="PROSITE" id="PS51002">
    <property type="entry name" value="CYTB_NTER"/>
    <property type="match status" value="1"/>
</dbReference>
<organism>
    <name type="scientific">Artibeus glaucus</name>
    <name type="common">Silver fruit-eating bat</name>
    <name type="synonym">Dermanura glauca</name>
    <dbReference type="NCBI Taxonomy" id="40226"/>
    <lineage>
        <taxon>Eukaryota</taxon>
        <taxon>Metazoa</taxon>
        <taxon>Chordata</taxon>
        <taxon>Craniata</taxon>
        <taxon>Vertebrata</taxon>
        <taxon>Euteleostomi</taxon>
        <taxon>Mammalia</taxon>
        <taxon>Eutheria</taxon>
        <taxon>Laurasiatheria</taxon>
        <taxon>Chiroptera</taxon>
        <taxon>Yangochiroptera</taxon>
        <taxon>Phyllostomidae</taxon>
        <taxon>Stenodermatinae</taxon>
        <taxon>Artibeus</taxon>
    </lineage>
</organism>
<protein>
    <recommendedName>
        <fullName>Cytochrome b</fullName>
    </recommendedName>
    <alternativeName>
        <fullName>Complex III subunit 3</fullName>
    </alternativeName>
    <alternativeName>
        <fullName>Complex III subunit III</fullName>
    </alternativeName>
    <alternativeName>
        <fullName>Cytochrome b-c1 complex subunit 3</fullName>
    </alternativeName>
    <alternativeName>
        <fullName>Ubiquinol-cytochrome-c reductase complex cytochrome b subunit</fullName>
    </alternativeName>
</protein>
<comment type="function">
    <text evidence="2">Component of the ubiquinol-cytochrome c reductase complex (complex III or cytochrome b-c1 complex) that is part of the mitochondrial respiratory chain. The b-c1 complex mediates electron transfer from ubiquinol to cytochrome c. Contributes to the generation of a proton gradient across the mitochondrial membrane that is then used for ATP synthesis.</text>
</comment>
<comment type="cofactor">
    <cofactor evidence="2">
        <name>heme b</name>
        <dbReference type="ChEBI" id="CHEBI:60344"/>
    </cofactor>
    <text evidence="2">Binds 2 heme b groups non-covalently.</text>
</comment>
<comment type="subunit">
    <text evidence="2">The cytochrome bc1 complex contains 11 subunits: 3 respiratory subunits (MT-CYB, CYC1 and UQCRFS1), 2 core proteins (UQCRC1 and UQCRC2) and 6 low-molecular weight proteins (UQCRH/QCR6, UQCRB/QCR7, UQCRQ/QCR8, UQCR10/QCR9, UQCR11/QCR10 and a cleavage product of UQCRFS1). This cytochrome bc1 complex then forms a dimer.</text>
</comment>
<comment type="subcellular location">
    <subcellularLocation>
        <location evidence="2">Mitochondrion inner membrane</location>
        <topology evidence="2">Multi-pass membrane protein</topology>
    </subcellularLocation>
</comment>
<comment type="miscellaneous">
    <text evidence="1">Heme 1 (or BL or b562) is low-potential and absorbs at about 562 nm, and heme 2 (or BH or b566) is high-potential and absorbs at about 566 nm.</text>
</comment>
<comment type="similarity">
    <text evidence="3 4">Belongs to the cytochrome b family.</text>
</comment>
<comment type="caution">
    <text evidence="2">The full-length protein contains only eight transmembrane helices, not nine as predicted by bioinformatics tools.</text>
</comment>
<name>CYB_ARTGA</name>
<feature type="chain" id="PRO_0000060629" description="Cytochrome b">
    <location>
        <begin position="1"/>
        <end position="379"/>
    </location>
</feature>
<feature type="transmembrane region" description="Helical" evidence="2">
    <location>
        <begin position="33"/>
        <end position="53"/>
    </location>
</feature>
<feature type="transmembrane region" description="Helical" evidence="2">
    <location>
        <begin position="77"/>
        <end position="98"/>
    </location>
</feature>
<feature type="transmembrane region" description="Helical" evidence="2">
    <location>
        <begin position="113"/>
        <end position="133"/>
    </location>
</feature>
<feature type="transmembrane region" description="Helical" evidence="2">
    <location>
        <begin position="178"/>
        <end position="198"/>
    </location>
</feature>
<feature type="transmembrane region" description="Helical" evidence="2">
    <location>
        <begin position="226"/>
        <end position="246"/>
    </location>
</feature>
<feature type="transmembrane region" description="Helical" evidence="2">
    <location>
        <begin position="288"/>
        <end position="308"/>
    </location>
</feature>
<feature type="transmembrane region" description="Helical" evidence="2">
    <location>
        <begin position="320"/>
        <end position="340"/>
    </location>
</feature>
<feature type="transmembrane region" description="Helical" evidence="2">
    <location>
        <begin position="347"/>
        <end position="367"/>
    </location>
</feature>
<feature type="binding site" description="axial binding residue" evidence="2">
    <location>
        <position position="83"/>
    </location>
    <ligand>
        <name>heme b</name>
        <dbReference type="ChEBI" id="CHEBI:60344"/>
        <label>b562</label>
    </ligand>
    <ligandPart>
        <name>Fe</name>
        <dbReference type="ChEBI" id="CHEBI:18248"/>
    </ligandPart>
</feature>
<feature type="binding site" description="axial binding residue" evidence="2">
    <location>
        <position position="97"/>
    </location>
    <ligand>
        <name>heme b</name>
        <dbReference type="ChEBI" id="CHEBI:60344"/>
        <label>b566</label>
    </ligand>
    <ligandPart>
        <name>Fe</name>
        <dbReference type="ChEBI" id="CHEBI:18248"/>
    </ligandPart>
</feature>
<feature type="binding site" description="axial binding residue" evidence="2">
    <location>
        <position position="182"/>
    </location>
    <ligand>
        <name>heme b</name>
        <dbReference type="ChEBI" id="CHEBI:60344"/>
        <label>b562</label>
    </ligand>
    <ligandPart>
        <name>Fe</name>
        <dbReference type="ChEBI" id="CHEBI:18248"/>
    </ligandPart>
</feature>
<feature type="binding site" description="axial binding residue" evidence="2">
    <location>
        <position position="196"/>
    </location>
    <ligand>
        <name>heme b</name>
        <dbReference type="ChEBI" id="CHEBI:60344"/>
        <label>b566</label>
    </ligand>
    <ligandPart>
        <name>Fe</name>
        <dbReference type="ChEBI" id="CHEBI:18248"/>
    </ligandPart>
</feature>
<feature type="binding site" evidence="2">
    <location>
        <position position="201"/>
    </location>
    <ligand>
        <name>a ubiquinone</name>
        <dbReference type="ChEBI" id="CHEBI:16389"/>
    </ligand>
</feature>
<reference key="1">
    <citation type="submission" date="1996-08" db="EMBL/GenBank/DDBJ databases">
        <title>Phylogenetic accuracy, stability, and congruence: relationships within and among the New World bat genera Artibeus, Dermanura, and Koopmania.</title>
        <authorList>
            <person name="den Bussche R.A."/>
            <person name="Hudgeons J.L."/>
            <person name="Baker R.J."/>
        </authorList>
    </citation>
    <scope>NUCLEOTIDE SEQUENCE [GENOMIC DNA]</scope>
    <source>
        <strain>Isolate TK 16636 / MVZ 173952</strain>
    </source>
</reference>
<gene>
    <name type="primary">MT-CYB</name>
    <name type="synonym">COB</name>
    <name type="synonym">CYTB</name>
    <name type="synonym">MTCYB</name>
</gene>
<proteinExistence type="inferred from homology"/>
<accession>Q95731</accession>
<evidence type="ECO:0000250" key="1"/>
<evidence type="ECO:0000250" key="2">
    <source>
        <dbReference type="UniProtKB" id="P00157"/>
    </source>
</evidence>
<evidence type="ECO:0000255" key="3">
    <source>
        <dbReference type="PROSITE-ProRule" id="PRU00967"/>
    </source>
</evidence>
<evidence type="ECO:0000255" key="4">
    <source>
        <dbReference type="PROSITE-ProRule" id="PRU00968"/>
    </source>
</evidence>
<sequence>MTNIRKTHPLLKIVNSSFVDLPAPSSLSSWWNFGSLLGVCLGVQILTGLFLAMHYTSDTATAFNSVTHICRDVNYGWLLRYLHANGASMFFICLYLHVGRGLYYGSYTYSETWNIGILLLFAVMATAFMGYVLPWGQMSFWGATVITNLLSAIPYIGTDLVQWIWGGFSVDKATLTRFFAFHFLLPFIVTALVMVHLLFLHETGSNNPTGIPSDPDMIPFHPYYTIKDILGFLVMLTALSTLVLFSPDLLGDPDNYIPANPLITPPHIKPEWYFLFAYAILRSIPNKLGGVLALVMSILILAIVPILHVSKQRSMMFRPLSQCLFWFLVAILFTLTWIGGQPVEHPYIIIGQTASVLYFLIILFLMPMTSMVENYLLKW</sequence>